<evidence type="ECO:0000250" key="1">
    <source>
        <dbReference type="UniProtKB" id="P04391"/>
    </source>
</evidence>
<evidence type="ECO:0000269" key="2">
    <source>
    </source>
</evidence>
<evidence type="ECO:0000303" key="3">
    <source>
    </source>
</evidence>
<evidence type="ECO:0000305" key="4"/>
<evidence type="ECO:0000305" key="5">
    <source>
    </source>
</evidence>
<evidence type="ECO:0007744" key="6">
    <source>
        <dbReference type="PDB" id="3Q98"/>
    </source>
</evidence>
<evidence type="ECO:0007829" key="7">
    <source>
        <dbReference type="PDB" id="3Q98"/>
    </source>
</evidence>
<comment type="function">
    <text evidence="2">Putative carbamoyltransferase. No activity can be detected with allantoin or 25 other related compounds, including 20 naturally occurring amino acids, N-acetyl-L-ornithine, N-succinyl-L-ornithine, L-ornithine, oxamate, beta-alanine and putrescine.</text>
</comment>
<comment type="subunit">
    <text evidence="2">Homotrimer.</text>
</comment>
<comment type="domain">
    <text evidence="2">Contains a carbamoyl phosphate domain (CPD) and a second substrate domain (SSD), which are linked by two helices.</text>
</comment>
<comment type="similarity">
    <text evidence="4">Belongs to the aspartate/ornithine carbamoyltransferase superfamily.</text>
</comment>
<comment type="sequence caution" evidence="4">
    <conflict type="frameshift">
        <sequence resource="EMBL-CDS" id="AAA83051"/>
    </conflict>
</comment>
<protein>
    <recommendedName>
        <fullName evidence="4">Putative carbamoyltransferase YgeW</fullName>
        <ecNumber evidence="5">2.1.3.-</ecNumber>
    </recommendedName>
    <alternativeName>
        <fullName evidence="3">UTCase</fullName>
    </alternativeName>
</protein>
<gene>
    <name type="primary">ygeW</name>
    <name type="ordered locus">b2870</name>
    <name type="ordered locus">JW5463</name>
</gene>
<organism>
    <name type="scientific">Escherichia coli (strain K12)</name>
    <dbReference type="NCBI Taxonomy" id="83333"/>
    <lineage>
        <taxon>Bacteria</taxon>
        <taxon>Pseudomonadati</taxon>
        <taxon>Pseudomonadota</taxon>
        <taxon>Gammaproteobacteria</taxon>
        <taxon>Enterobacterales</taxon>
        <taxon>Enterobacteriaceae</taxon>
        <taxon>Escherichia</taxon>
    </lineage>
</organism>
<dbReference type="EC" id="2.1.3.-" evidence="5"/>
<dbReference type="EMBL" id="U28375">
    <property type="protein sequence ID" value="AAA83051.1"/>
    <property type="status" value="ALT_FRAME"/>
    <property type="molecule type" value="Genomic_DNA"/>
</dbReference>
<dbReference type="EMBL" id="U00096">
    <property type="protein sequence ID" value="AAT48152.1"/>
    <property type="molecule type" value="Genomic_DNA"/>
</dbReference>
<dbReference type="EMBL" id="AP009048">
    <property type="protein sequence ID" value="BAE76936.1"/>
    <property type="molecule type" value="Genomic_DNA"/>
</dbReference>
<dbReference type="PIR" id="F65070">
    <property type="entry name" value="F65070"/>
</dbReference>
<dbReference type="RefSeq" id="YP_026185.1">
    <property type="nucleotide sequence ID" value="NC_000913.3"/>
</dbReference>
<dbReference type="PDB" id="3Q98">
    <property type="method" value="X-ray"/>
    <property type="resolution" value="2.00 A"/>
    <property type="chains" value="A=1-396"/>
</dbReference>
<dbReference type="PDBsum" id="3Q98"/>
<dbReference type="SMR" id="Q46803"/>
<dbReference type="BioGRID" id="4261510">
    <property type="interactions" value="20"/>
</dbReference>
<dbReference type="FunCoup" id="Q46803">
    <property type="interactions" value="13"/>
</dbReference>
<dbReference type="STRING" id="511145.b2870"/>
<dbReference type="jPOST" id="Q46803"/>
<dbReference type="PaxDb" id="511145-b2870"/>
<dbReference type="EnsemblBacteria" id="AAT48152">
    <property type="protein sequence ID" value="AAT48152"/>
    <property type="gene ID" value="b2870"/>
</dbReference>
<dbReference type="GeneID" id="945826"/>
<dbReference type="KEGG" id="ecj:JW5463"/>
<dbReference type="KEGG" id="eco:b2870"/>
<dbReference type="PATRIC" id="fig|511145.12.peg.2963"/>
<dbReference type="EchoBASE" id="EB2865"/>
<dbReference type="eggNOG" id="COG0078">
    <property type="taxonomic scope" value="Bacteria"/>
</dbReference>
<dbReference type="HOGENOM" id="CLU_043846_3_3_6"/>
<dbReference type="InParanoid" id="Q46803"/>
<dbReference type="OMA" id="VAMTWAY"/>
<dbReference type="PhylomeDB" id="Q46803"/>
<dbReference type="BioCyc" id="EcoCyc:G7489-MONOMER"/>
<dbReference type="EvolutionaryTrace" id="Q46803"/>
<dbReference type="PRO" id="PR:Q46803"/>
<dbReference type="Proteomes" id="UP000000625">
    <property type="component" value="Chromosome"/>
</dbReference>
<dbReference type="GO" id="GO:0016597">
    <property type="term" value="F:amino acid binding"/>
    <property type="evidence" value="ECO:0007669"/>
    <property type="project" value="InterPro"/>
</dbReference>
<dbReference type="GO" id="GO:0004585">
    <property type="term" value="F:ornithine carbamoyltransferase activity"/>
    <property type="evidence" value="ECO:0000318"/>
    <property type="project" value="GO_Central"/>
</dbReference>
<dbReference type="GO" id="GO:0042450">
    <property type="term" value="P:arginine biosynthetic process via ornithine"/>
    <property type="evidence" value="ECO:0000318"/>
    <property type="project" value="GO_Central"/>
</dbReference>
<dbReference type="GO" id="GO:0019240">
    <property type="term" value="P:citrulline biosynthetic process"/>
    <property type="evidence" value="ECO:0000318"/>
    <property type="project" value="GO_Central"/>
</dbReference>
<dbReference type="Gene3D" id="3.40.50.1370">
    <property type="entry name" value="Aspartate/ornithine carbamoyltransferase"/>
    <property type="match status" value="2"/>
</dbReference>
<dbReference type="InterPro" id="IPR006132">
    <property type="entry name" value="Asp/Orn_carbamoyltranf_P-bd"/>
</dbReference>
<dbReference type="InterPro" id="IPR006130">
    <property type="entry name" value="Asp/Orn_carbamoylTrfase"/>
</dbReference>
<dbReference type="InterPro" id="IPR036901">
    <property type="entry name" value="Asp/Orn_carbamoylTrfase_sf"/>
</dbReference>
<dbReference type="InterPro" id="IPR006131">
    <property type="entry name" value="Asp_carbamoyltransf_Asp/Orn-bd"/>
</dbReference>
<dbReference type="InterPro" id="IPR017702">
    <property type="entry name" value="Carbamoyltransferase_YgeW"/>
</dbReference>
<dbReference type="NCBIfam" id="NF005538">
    <property type="entry name" value="PRK07200.1"/>
    <property type="match status" value="1"/>
</dbReference>
<dbReference type="NCBIfam" id="TIGR03316">
    <property type="entry name" value="ygeW"/>
    <property type="match status" value="1"/>
</dbReference>
<dbReference type="PANTHER" id="PTHR45753">
    <property type="entry name" value="ORNITHINE CARBAMOYLTRANSFERASE, MITOCHONDRIAL"/>
    <property type="match status" value="1"/>
</dbReference>
<dbReference type="PANTHER" id="PTHR45753:SF3">
    <property type="entry name" value="ORNITHINE TRANSCARBAMYLASE, MITOCHONDRIAL"/>
    <property type="match status" value="1"/>
</dbReference>
<dbReference type="Pfam" id="PF00185">
    <property type="entry name" value="OTCace"/>
    <property type="match status" value="1"/>
</dbReference>
<dbReference type="Pfam" id="PF02729">
    <property type="entry name" value="OTCace_N"/>
    <property type="match status" value="1"/>
</dbReference>
<dbReference type="PRINTS" id="PR00100">
    <property type="entry name" value="AOTCASE"/>
</dbReference>
<dbReference type="PRINTS" id="PR00101">
    <property type="entry name" value="ATCASE"/>
</dbReference>
<dbReference type="SUPFAM" id="SSF53671">
    <property type="entry name" value="Aspartate/ornithine carbamoyltransferase"/>
    <property type="match status" value="1"/>
</dbReference>
<keyword id="KW-0002">3D-structure</keyword>
<keyword id="KW-1185">Reference proteome</keyword>
<keyword id="KW-0808">Transferase</keyword>
<feature type="chain" id="PRO_0000113263" description="Putative carbamoyltransferase YgeW">
    <location>
        <begin position="1"/>
        <end position="396"/>
    </location>
</feature>
<feature type="binding site" evidence="1">
    <location>
        <begin position="71"/>
        <end position="74"/>
    </location>
    <ligand>
        <name>carbamoyl phosphate</name>
        <dbReference type="ChEBI" id="CHEBI:58228"/>
    </ligand>
</feature>
<feature type="binding site" evidence="1">
    <location>
        <position position="98"/>
    </location>
    <ligand>
        <name>carbamoyl phosphate</name>
        <dbReference type="ChEBI" id="CHEBI:58228"/>
    </ligand>
</feature>
<feature type="binding site" evidence="1">
    <location>
        <begin position="165"/>
        <end position="168"/>
    </location>
    <ligand>
        <name>carbamoyl phosphate</name>
        <dbReference type="ChEBI" id="CHEBI:58228"/>
    </ligand>
</feature>
<feature type="binding site" evidence="1">
    <location>
        <begin position="330"/>
        <end position="331"/>
    </location>
    <ligand>
        <name>carbamoyl phosphate</name>
        <dbReference type="ChEBI" id="CHEBI:58228"/>
    </ligand>
</feature>
<feature type="helix" evidence="7">
    <location>
        <begin position="2"/>
        <end position="13"/>
    </location>
</feature>
<feature type="helix" evidence="7">
    <location>
        <begin position="19"/>
        <end position="21"/>
    </location>
</feature>
<feature type="helix" evidence="7">
    <location>
        <begin position="27"/>
        <end position="29"/>
    </location>
</feature>
<feature type="helix" evidence="7">
    <location>
        <begin position="32"/>
        <end position="50"/>
    </location>
</feature>
<feature type="strand" evidence="7">
    <location>
        <begin position="62"/>
        <end position="68"/>
    </location>
</feature>
<feature type="helix" evidence="7">
    <location>
        <begin position="77"/>
        <end position="85"/>
    </location>
</feature>
<feature type="strand" evidence="7">
    <location>
        <begin position="88"/>
        <end position="91"/>
    </location>
</feature>
<feature type="helix" evidence="7">
    <location>
        <begin position="105"/>
        <end position="111"/>
    </location>
</feature>
<feature type="strand" evidence="7">
    <location>
        <begin position="116"/>
        <end position="123"/>
    </location>
</feature>
<feature type="helix" evidence="7">
    <location>
        <begin position="133"/>
        <end position="146"/>
    </location>
</feature>
<feature type="strand" evidence="7">
    <location>
        <begin position="155"/>
        <end position="160"/>
    </location>
</feature>
<feature type="helix" evidence="7">
    <location>
        <begin position="166"/>
        <end position="180"/>
    </location>
</feature>
<feature type="strand" evidence="7">
    <location>
        <begin position="181"/>
        <end position="183"/>
    </location>
</feature>
<feature type="helix" evidence="7">
    <location>
        <begin position="184"/>
        <end position="186"/>
    </location>
</feature>
<feature type="strand" evidence="7">
    <location>
        <begin position="190"/>
        <end position="194"/>
    </location>
</feature>
<feature type="helix" evidence="7">
    <location>
        <begin position="206"/>
        <end position="215"/>
    </location>
</feature>
<feature type="helix" evidence="7">
    <location>
        <begin position="216"/>
        <end position="218"/>
    </location>
</feature>
<feature type="strand" evidence="7">
    <location>
        <begin position="221"/>
        <end position="225"/>
    </location>
</feature>
<feature type="helix" evidence="7">
    <location>
        <begin position="234"/>
        <end position="247"/>
    </location>
</feature>
<feature type="strand" evidence="7">
    <location>
        <begin position="250"/>
        <end position="255"/>
    </location>
</feature>
<feature type="helix" evidence="7">
    <location>
        <begin position="257"/>
        <end position="261"/>
    </location>
</feature>
<feature type="strand" evidence="7">
    <location>
        <begin position="265"/>
        <end position="269"/>
    </location>
</feature>
<feature type="helix" evidence="7">
    <location>
        <begin position="275"/>
        <end position="286"/>
    </location>
</feature>
<feature type="helix" evidence="7">
    <location>
        <begin position="290"/>
        <end position="305"/>
    </location>
</feature>
<feature type="turn" evidence="7">
    <location>
        <begin position="306"/>
        <end position="309"/>
    </location>
</feature>
<feature type="helix" evidence="7">
    <location>
        <begin position="314"/>
        <end position="318"/>
    </location>
</feature>
<feature type="helix" evidence="7">
    <location>
        <begin position="321"/>
        <end position="323"/>
    </location>
</feature>
<feature type="strand" evidence="7">
    <location>
        <begin position="339"/>
        <end position="342"/>
    </location>
</feature>
<feature type="strand" evidence="7">
    <location>
        <begin position="344"/>
        <end position="346"/>
    </location>
</feature>
<feature type="helix" evidence="7">
    <location>
        <begin position="347"/>
        <end position="362"/>
    </location>
</feature>
<feature type="helix" evidence="7">
    <location>
        <begin position="364"/>
        <end position="376"/>
    </location>
</feature>
<feature type="helix" evidence="7">
    <location>
        <begin position="380"/>
        <end position="390"/>
    </location>
</feature>
<sequence>MMKTVNELIKDINSLTSHLHEKDFLLTWEQTPDELKQVLDVAAALKALRAENISTKVFNSGLGISVFRDNSTRTRFSYASALNLLGLAQQDLDEGKSQIAHGETVRETANMISFCADAIGIRDDMYLGAGNAYMREVGAALDDGYKQGVLPQRPALVNLQCDIDHPTQSMADLAWLREHFGSLENLKGKKIAMTWAYSPSYGKPLSVPQGIIGLMTRFGMDVTLAHPEGYDLIPDVVEVAKNNAKASGGSFRQVTSMEEAFKDADIVYPKSWAPYKVMEERTELLRANDHEGLKALEKQCLAQNAQHKDWHCTEEMMELTRDGEALYMHCLPADISGVSCKEGEVTEGVFEKYRIATYKEASWKPYIIAAMILSRKYAKPGALLEQLLKEAQERVK</sequence>
<proteinExistence type="evidence at protein level"/>
<accession>Q46803</accession>
<accession>Q2M9X0</accession>
<accession>Q6BF62</accession>
<reference key="1">
    <citation type="journal article" date="1997" name="Science">
        <title>The complete genome sequence of Escherichia coli K-12.</title>
        <authorList>
            <person name="Blattner F.R."/>
            <person name="Plunkett G. III"/>
            <person name="Bloch C.A."/>
            <person name="Perna N.T."/>
            <person name="Burland V."/>
            <person name="Riley M."/>
            <person name="Collado-Vides J."/>
            <person name="Glasner J.D."/>
            <person name="Rode C.K."/>
            <person name="Mayhew G.F."/>
            <person name="Gregor J."/>
            <person name="Davis N.W."/>
            <person name="Kirkpatrick H.A."/>
            <person name="Goeden M.A."/>
            <person name="Rose D.J."/>
            <person name="Mau B."/>
            <person name="Shao Y."/>
        </authorList>
    </citation>
    <scope>NUCLEOTIDE SEQUENCE [LARGE SCALE GENOMIC DNA]</scope>
    <source>
        <strain>K12 / MG1655 / ATCC 47076</strain>
    </source>
</reference>
<reference key="2">
    <citation type="journal article" date="2006" name="Nucleic Acids Res.">
        <title>Escherichia coli K-12: a cooperatively developed annotation snapshot -- 2005.</title>
        <authorList>
            <person name="Riley M."/>
            <person name="Abe T."/>
            <person name="Arnaud M.B."/>
            <person name="Berlyn M.K.B."/>
            <person name="Blattner F.R."/>
            <person name="Chaudhuri R.R."/>
            <person name="Glasner J.D."/>
            <person name="Horiuchi T."/>
            <person name="Keseler I.M."/>
            <person name="Kosuge T."/>
            <person name="Mori H."/>
            <person name="Perna N.T."/>
            <person name="Plunkett G. III"/>
            <person name="Rudd K.E."/>
            <person name="Serres M.H."/>
            <person name="Thomas G.H."/>
            <person name="Thomson N.R."/>
            <person name="Wishart D."/>
            <person name="Wanner B.L."/>
        </authorList>
    </citation>
    <scope>SEQUENCE REVISION</scope>
</reference>
<reference key="3">
    <citation type="journal article" date="2006" name="Mol. Syst. Biol.">
        <title>Highly accurate genome sequences of Escherichia coli K-12 strains MG1655 and W3110.</title>
        <authorList>
            <person name="Hayashi K."/>
            <person name="Morooka N."/>
            <person name="Yamamoto Y."/>
            <person name="Fujita K."/>
            <person name="Isono K."/>
            <person name="Choi S."/>
            <person name="Ohtsubo E."/>
            <person name="Baba T."/>
            <person name="Wanner B.L."/>
            <person name="Mori H."/>
            <person name="Horiuchi T."/>
        </authorList>
    </citation>
    <scope>NUCLEOTIDE SEQUENCE [LARGE SCALE GENOMIC DNA]</scope>
    <source>
        <strain>K12 / W3110 / ATCC 27325 / DSM 5911</strain>
    </source>
</reference>
<reference evidence="6" key="4">
    <citation type="journal article" date="2011" name="Proteins">
        <title>The ygeW encoded protein from Escherichia coli is a knotted ancestral catabolic transcarbamylase.</title>
        <authorList>
            <person name="Li Y."/>
            <person name="Jin Z."/>
            <person name="Yu X."/>
            <person name="Allewell N.M."/>
            <person name="Tuchman M."/>
            <person name="Shi D."/>
        </authorList>
    </citation>
    <scope>X-RAY CRYSTALLOGRAPHY (2.00 ANGSTROMS)</scope>
    <scope>PRELIMINARY FUNCTION</scope>
    <scope>SUBUNIT</scope>
    <scope>DOMAIN</scope>
</reference>
<name>YGEW_ECOLI</name>